<accession>Q68XI7</accession>
<name>ODO1_RICTY</name>
<sequence length="933" mass="105257">MEKYFNKTGYLFAGNAVFVEELYRQYLANPNSVDQTWQEFFADIKDNNALLNKSTAKVIRPNPNVTKALLNNNLSYEGLHNLKAKEMISAYRRNAHYLANLDPLGLEIRKTKDELKLNIEAFGLDSSQLEENINITDEFIGTWNCKLSELVTKLDKVYTSSIGVEFDQIENVEEKNWLYTKLETEITFASEEKRSILNDFVEVECFEQFLHTKFPGAKRFSIEGGDSSIVAMNKAIDLSMNQGVEEIVIGMAHRGRLNTLTKVVGKPYKAVIAGFINGNVFPDELNISGDVKYHLGYSADRVRANQKIHLSLADNPSHLEAINSIVAGKVRAKQDMLVDTKRSKVKAILLHGDAAFCGQGVVAESLSMSPLTAYNVGGILHFVINNQLGFTANAADTRASRYSTEFAKIIAAPILHVNGDDIEAVLKATDIAVEYRQKFSKDVVVEIICYRKYGHNEGDEPMYTQSKMYNIIKSKPTPGNIYANELVKSGIIDNNYYAKLKEKFKIKLDKEYEQAKSYKQESHFLGGCWKGISRTRGKAAITGVNKKILQDLGTKLCEIPKDFTINPKLVRLFEVRKNTLTTDQPIDWATAEQLAFAHLLCSGTNIRLTGQDSERGTFSHRHSILHNQIDDTTYIPLNNLSKTQAQYEVANSNLAEYAVLGFEYGYSLASPKNLVLWEAQFGDFANGAQIIFDQFISSSATKWLRMSGLVVLLPHAFEGQGPEHSSARLERFLQLAAEENMYITYPTTPASIFHLLRRQILESIRKPLIVMSPKSLLRHKYAVSKLDELGENTTFIPVLDEVTKIDKNNITKVILCSGKVYYDLFAKRVHNSNIVIIRLEQLYPFEKTLVASLLKKYNKAQAFIWCQEEPKNMGAWNYIAEHLNDALKEAEINNEFKYVGREESASPAVGSLQVHNKQQEKLLMEALGDDIIK</sequence>
<dbReference type="EC" id="1.2.4.2" evidence="1"/>
<dbReference type="EMBL" id="AE017197">
    <property type="protein sequence ID" value="AAU03655.1"/>
    <property type="molecule type" value="Genomic_DNA"/>
</dbReference>
<dbReference type="RefSeq" id="WP_011190642.1">
    <property type="nucleotide sequence ID" value="NC_006142.1"/>
</dbReference>
<dbReference type="SMR" id="Q68XI7"/>
<dbReference type="KEGG" id="rty:RT0171"/>
<dbReference type="eggNOG" id="COG0567">
    <property type="taxonomic scope" value="Bacteria"/>
</dbReference>
<dbReference type="HOGENOM" id="CLU_004709_1_0_5"/>
<dbReference type="OrthoDB" id="9759785at2"/>
<dbReference type="Proteomes" id="UP000000604">
    <property type="component" value="Chromosome"/>
</dbReference>
<dbReference type="GO" id="GO:0005829">
    <property type="term" value="C:cytosol"/>
    <property type="evidence" value="ECO:0007669"/>
    <property type="project" value="TreeGrafter"/>
</dbReference>
<dbReference type="GO" id="GO:0045252">
    <property type="term" value="C:oxoglutarate dehydrogenase complex"/>
    <property type="evidence" value="ECO:0007669"/>
    <property type="project" value="TreeGrafter"/>
</dbReference>
<dbReference type="GO" id="GO:0004591">
    <property type="term" value="F:oxoglutarate dehydrogenase (succinyl-transferring) activity"/>
    <property type="evidence" value="ECO:0007669"/>
    <property type="project" value="UniProtKB-EC"/>
</dbReference>
<dbReference type="GO" id="GO:0030976">
    <property type="term" value="F:thiamine pyrophosphate binding"/>
    <property type="evidence" value="ECO:0007669"/>
    <property type="project" value="InterPro"/>
</dbReference>
<dbReference type="GO" id="GO:0006096">
    <property type="term" value="P:glycolytic process"/>
    <property type="evidence" value="ECO:0007669"/>
    <property type="project" value="UniProtKB-KW"/>
</dbReference>
<dbReference type="GO" id="GO:0006099">
    <property type="term" value="P:tricarboxylic acid cycle"/>
    <property type="evidence" value="ECO:0007669"/>
    <property type="project" value="TreeGrafter"/>
</dbReference>
<dbReference type="CDD" id="cd02016">
    <property type="entry name" value="TPP_E1_OGDC_like"/>
    <property type="match status" value="1"/>
</dbReference>
<dbReference type="FunFam" id="3.40.50.12470:FF:000009">
    <property type="entry name" value="2-oxoglutarate dehydrogenase E1 component"/>
    <property type="match status" value="1"/>
</dbReference>
<dbReference type="Gene3D" id="3.40.50.12470">
    <property type="match status" value="1"/>
</dbReference>
<dbReference type="Gene3D" id="3.40.50.970">
    <property type="match status" value="1"/>
</dbReference>
<dbReference type="Gene3D" id="3.40.50.11610">
    <property type="entry name" value="Multifunctional 2-oxoglutarate metabolism enzyme, C-terminal domain"/>
    <property type="match status" value="1"/>
</dbReference>
<dbReference type="Gene3D" id="1.10.287.1150">
    <property type="entry name" value="TPP helical domain"/>
    <property type="match status" value="1"/>
</dbReference>
<dbReference type="InterPro" id="IPR032106">
    <property type="entry name" value="2-oxogl_dehyd_N"/>
</dbReference>
<dbReference type="InterPro" id="IPR011603">
    <property type="entry name" value="2oxoglutarate_DH_E1"/>
</dbReference>
<dbReference type="InterPro" id="IPR001017">
    <property type="entry name" value="DH_E1"/>
</dbReference>
<dbReference type="InterPro" id="IPR042179">
    <property type="entry name" value="KGD_C_sf"/>
</dbReference>
<dbReference type="InterPro" id="IPR031717">
    <property type="entry name" value="ODO-1/KGD_C"/>
</dbReference>
<dbReference type="InterPro" id="IPR029061">
    <property type="entry name" value="THDP-binding"/>
</dbReference>
<dbReference type="InterPro" id="IPR005475">
    <property type="entry name" value="Transketolase-like_Pyr-bd"/>
</dbReference>
<dbReference type="NCBIfam" id="TIGR00239">
    <property type="entry name" value="2oxo_dh_E1"/>
    <property type="match status" value="1"/>
</dbReference>
<dbReference type="NCBIfam" id="NF006914">
    <property type="entry name" value="PRK09404.1"/>
    <property type="match status" value="1"/>
</dbReference>
<dbReference type="NCBIfam" id="NF008907">
    <property type="entry name" value="PRK12270.1"/>
    <property type="match status" value="1"/>
</dbReference>
<dbReference type="PANTHER" id="PTHR23152:SF4">
    <property type="entry name" value="2-OXOADIPATE DEHYDROGENASE COMPLEX COMPONENT E1"/>
    <property type="match status" value="1"/>
</dbReference>
<dbReference type="PANTHER" id="PTHR23152">
    <property type="entry name" value="2-OXOGLUTARATE DEHYDROGENASE"/>
    <property type="match status" value="1"/>
</dbReference>
<dbReference type="Pfam" id="PF16078">
    <property type="entry name" value="2-oxogl_dehyd_N"/>
    <property type="match status" value="1"/>
</dbReference>
<dbReference type="Pfam" id="PF00676">
    <property type="entry name" value="E1_dh"/>
    <property type="match status" value="1"/>
</dbReference>
<dbReference type="Pfam" id="PF16870">
    <property type="entry name" value="OxoGdeHyase_C"/>
    <property type="match status" value="1"/>
</dbReference>
<dbReference type="Pfam" id="PF02779">
    <property type="entry name" value="Transket_pyr"/>
    <property type="match status" value="1"/>
</dbReference>
<dbReference type="PIRSF" id="PIRSF000157">
    <property type="entry name" value="Oxoglu_dh_E1"/>
    <property type="match status" value="1"/>
</dbReference>
<dbReference type="SMART" id="SM00861">
    <property type="entry name" value="Transket_pyr"/>
    <property type="match status" value="1"/>
</dbReference>
<dbReference type="SUPFAM" id="SSF52518">
    <property type="entry name" value="Thiamin diphosphate-binding fold (THDP-binding)"/>
    <property type="match status" value="2"/>
</dbReference>
<comment type="function">
    <text evidence="1">E1 component of the 2-oxoglutarate dehydrogenase (OGDH) complex which catalyzes the decarboxylation of 2-oxoglutarate, the first step in the conversion of 2-oxoglutarate to succinyl-CoA and CO(2).</text>
</comment>
<comment type="catalytic activity">
    <reaction evidence="1">
        <text>N(6)-[(R)-lipoyl]-L-lysyl-[protein] + 2-oxoglutarate + H(+) = N(6)-[(R)-S(8)-succinyldihydrolipoyl]-L-lysyl-[protein] + CO2</text>
        <dbReference type="Rhea" id="RHEA:12188"/>
        <dbReference type="Rhea" id="RHEA-COMP:10474"/>
        <dbReference type="Rhea" id="RHEA-COMP:20092"/>
        <dbReference type="ChEBI" id="CHEBI:15378"/>
        <dbReference type="ChEBI" id="CHEBI:16526"/>
        <dbReference type="ChEBI" id="CHEBI:16810"/>
        <dbReference type="ChEBI" id="CHEBI:83099"/>
        <dbReference type="ChEBI" id="CHEBI:83120"/>
        <dbReference type="EC" id="1.2.4.2"/>
    </reaction>
</comment>
<comment type="cofactor">
    <cofactor evidence="1">
        <name>thiamine diphosphate</name>
        <dbReference type="ChEBI" id="CHEBI:58937"/>
    </cofactor>
</comment>
<comment type="subunit">
    <text evidence="1">Homodimer. Part of the 2-oxoglutarate dehydrogenase (OGDH) complex composed of E1 (2-oxoglutarate dehydrogenase), E2 (dihydrolipoamide succinyltransferase) and E3 (dihydrolipoamide dehydrogenase); the complex contains multiple copies of the three enzymatic components (E1, E2 and E3).</text>
</comment>
<comment type="similarity">
    <text evidence="2">Belongs to the alpha-ketoglutarate dehydrogenase family.</text>
</comment>
<reference key="1">
    <citation type="journal article" date="2004" name="J. Bacteriol.">
        <title>Complete genome sequence of Rickettsia typhi and comparison with sequences of other Rickettsiae.</title>
        <authorList>
            <person name="McLeod M.P."/>
            <person name="Qin X."/>
            <person name="Karpathy S.E."/>
            <person name="Gioia J."/>
            <person name="Highlander S.K."/>
            <person name="Fox G.E."/>
            <person name="McNeill T.Z."/>
            <person name="Jiang H."/>
            <person name="Muzny D."/>
            <person name="Jacob L.S."/>
            <person name="Hawes A.C."/>
            <person name="Sodergren E."/>
            <person name="Gill R."/>
            <person name="Hume J."/>
            <person name="Morgan M."/>
            <person name="Fan G."/>
            <person name="Amin A.G."/>
            <person name="Gibbs R.A."/>
            <person name="Hong C."/>
            <person name="Yu X.-J."/>
            <person name="Walker D.H."/>
            <person name="Weinstock G.M."/>
        </authorList>
    </citation>
    <scope>NUCLEOTIDE SEQUENCE [LARGE SCALE GENOMIC DNA]</scope>
    <source>
        <strain>ATCC VR-144 / Wilmington</strain>
    </source>
</reference>
<protein>
    <recommendedName>
        <fullName>2-oxoglutarate dehydrogenase E1 component</fullName>
        <ecNumber evidence="1">1.2.4.2</ecNumber>
    </recommendedName>
    <alternativeName>
        <fullName>Alpha-ketoglutarate dehydrogenase</fullName>
    </alternativeName>
</protein>
<keyword id="KW-0324">Glycolysis</keyword>
<keyword id="KW-0560">Oxidoreductase</keyword>
<keyword id="KW-0786">Thiamine pyrophosphate</keyword>
<proteinExistence type="inferred from homology"/>
<evidence type="ECO:0000250" key="1">
    <source>
        <dbReference type="UniProtKB" id="P0AFG3"/>
    </source>
</evidence>
<evidence type="ECO:0000305" key="2"/>
<gene>
    <name type="primary">sucA</name>
    <name type="ordered locus">RT0171</name>
</gene>
<feature type="chain" id="PRO_0000288751" description="2-oxoglutarate dehydrogenase E1 component">
    <location>
        <begin position="1"/>
        <end position="933"/>
    </location>
</feature>
<organism>
    <name type="scientific">Rickettsia typhi (strain ATCC VR-144 / Wilmington)</name>
    <dbReference type="NCBI Taxonomy" id="257363"/>
    <lineage>
        <taxon>Bacteria</taxon>
        <taxon>Pseudomonadati</taxon>
        <taxon>Pseudomonadota</taxon>
        <taxon>Alphaproteobacteria</taxon>
        <taxon>Rickettsiales</taxon>
        <taxon>Rickettsiaceae</taxon>
        <taxon>Rickettsieae</taxon>
        <taxon>Rickettsia</taxon>
        <taxon>typhus group</taxon>
    </lineage>
</organism>